<dbReference type="EMBL" id="AF011378">
    <property type="protein sequence ID" value="AAB70066.1"/>
    <property type="molecule type" value="Genomic_DNA"/>
</dbReference>
<dbReference type="RefSeq" id="NP_044972.1">
    <property type="nucleotide sequence ID" value="NC_001835.1"/>
</dbReference>
<dbReference type="GeneID" id="1261281"/>
<dbReference type="KEGG" id="vg:1261281"/>
<dbReference type="Proteomes" id="UP000000839">
    <property type="component" value="Genome"/>
</dbReference>
<dbReference type="InterPro" id="IPR021739">
    <property type="entry name" value="SaV-like"/>
</dbReference>
<dbReference type="Pfam" id="PF11753">
    <property type="entry name" value="DUF3310"/>
    <property type="match status" value="1"/>
</dbReference>
<sequence>MNYGTNNHYANEYGMELNEYFKHHFNYEELAGWYTMQVLKYLVRAGKKEGESYDKDRNKALDYAGELANLSNENELTEYTTDDIMGFAQDIADDFKQWKDERNNFKSEFTKEEIKAIDERYLEFIEEV</sequence>
<protein>
    <recommendedName>
        <fullName>SaV protein</fullName>
    </recommendedName>
    <alternativeName>
        <fullName>Gene product 26</fullName>
        <shortName>Gp26</shortName>
    </alternativeName>
</protein>
<reference key="1">
    <citation type="journal article" date="1997" name="Mol. Microbiol.">
        <title>Analysis of the DNA sequence, gene expression, origin of replication and modular structure of the Lactococcus lactis lytic bacteriophage sk1.</title>
        <authorList>
            <person name="Chandry P.S."/>
            <person name="Moore S.C."/>
            <person name="Boyce J.D."/>
            <person name="Davidson B.E."/>
            <person name="Hillier A.J."/>
        </authorList>
    </citation>
    <scope>NUCLEOTIDE SEQUENCE [LARGE SCALE GENOMIC DNA]</scope>
</reference>
<keyword id="KW-0244">Early protein</keyword>
<keyword id="KW-1185">Reference proteome</keyword>
<comment type="function">
    <text evidence="1">Involved in the sensitivity of the virus to the host AbiV system.</text>
</comment>
<comment type="similarity">
    <text evidence="2">Belongs to the skunalikevirus SaV protein family.</text>
</comment>
<organismHost>
    <name type="scientific">Lactococcus lactis</name>
    <dbReference type="NCBI Taxonomy" id="1358"/>
</organismHost>
<feature type="chain" id="PRO_0000438264" description="SaV protein">
    <location>
        <begin position="1"/>
        <end position="128"/>
    </location>
</feature>
<accession>O21894</accession>
<evidence type="ECO:0000250" key="1">
    <source>
        <dbReference type="UniProtKB" id="B6UL32"/>
    </source>
</evidence>
<evidence type="ECO:0000305" key="2"/>
<name>SAV_BPLSK</name>
<proteinExistence type="inferred from homology"/>
<organism>
    <name type="scientific">Lactococcus phage SK1</name>
    <name type="common">Lactococcus lactis bacteriophage SK1</name>
    <dbReference type="NCBI Taxonomy" id="2905675"/>
    <lineage>
        <taxon>Viruses</taxon>
        <taxon>Duplodnaviria</taxon>
        <taxon>Heunggongvirae</taxon>
        <taxon>Uroviricota</taxon>
        <taxon>Caudoviricetes</taxon>
        <taxon>Skunavirus</taxon>
        <taxon>Skunavirus sk1</taxon>
    </lineage>
</organism>